<accession>B5R598</accession>
<organism>
    <name type="scientific">Salmonella enteritidis PT4 (strain P125109)</name>
    <dbReference type="NCBI Taxonomy" id="550537"/>
    <lineage>
        <taxon>Bacteria</taxon>
        <taxon>Pseudomonadati</taxon>
        <taxon>Pseudomonadota</taxon>
        <taxon>Gammaproteobacteria</taxon>
        <taxon>Enterobacterales</taxon>
        <taxon>Enterobacteriaceae</taxon>
        <taxon>Salmonella</taxon>
    </lineage>
</organism>
<protein>
    <recommendedName>
        <fullName evidence="1">Chaperone protein HscA</fullName>
    </recommendedName>
    <alternativeName>
        <fullName evidence="1">Hsc66</fullName>
    </alternativeName>
</protein>
<comment type="function">
    <text evidence="1">Chaperone involved in the maturation of iron-sulfur cluster-containing proteins. Has a low intrinsic ATPase activity which is markedly stimulated by HscB. Involved in the maturation of IscU.</text>
</comment>
<comment type="similarity">
    <text evidence="1">Belongs to the heat shock protein 70 family.</text>
</comment>
<feature type="chain" id="PRO_1000131688" description="Chaperone protein HscA">
    <location>
        <begin position="1"/>
        <end position="616"/>
    </location>
</feature>
<sequence length="616" mass="65607">MALLQISEPGLSAAPHQRRLAAGIDLGTTNSLVATVRSGQAETLPDHEGRHLLPSVVHYQQQGHTVGYAARDNAAQDTANTISSVKRMMGRSLADIQARYPHLPYRFKASVNGLPMIDTAAGLLNPVRVSADILKALAARASESLSGELDGVVITVPAYFDDAQRQGTKDAARLAGLHVLRLLNEPTAAAIAYGLDSGKEGVIAVYDLGGGTFDISILRLSRGVFEVLATGGDSALGGDDFDHLLADYIREQAGIADRSDNRVQRELLDAAIAAKIALSDADTVRVNVAGWQGEITREQFNDLISALVKRTLLACRRALKDAGVDPQDVLEVVMVGGSTRVPLVRERVGEFFGRTPLTAIDPDKVVAIGAAIQADILVGNKPDSEMLLLDVIPLSLGLETMGGLVEKVIPRNTTIPVARAQDFTTFKDGQTAMSIHVMQGERELVQDCRSLARFALRGIPPLPAGGAHIRVTFQVDADGLLSVTAMEKSTGVEASIQVKPSYGLTDGEIASMIKDSMSFAEQDVKARMLAEQKVEAARVLESLTGALTADAALLSAAERQCIDDAAAHLSAVAQGDDVDAIEQAIKNVDKQTQEFAARRMDQSVRRALKGHSVDEV</sequence>
<reference key="1">
    <citation type="journal article" date="2008" name="Genome Res.">
        <title>Comparative genome analysis of Salmonella enteritidis PT4 and Salmonella gallinarum 287/91 provides insights into evolutionary and host adaptation pathways.</title>
        <authorList>
            <person name="Thomson N.R."/>
            <person name="Clayton D.J."/>
            <person name="Windhorst D."/>
            <person name="Vernikos G."/>
            <person name="Davidson S."/>
            <person name="Churcher C."/>
            <person name="Quail M.A."/>
            <person name="Stevens M."/>
            <person name="Jones M.A."/>
            <person name="Watson M."/>
            <person name="Barron A."/>
            <person name="Layton A."/>
            <person name="Pickard D."/>
            <person name="Kingsley R.A."/>
            <person name="Bignell A."/>
            <person name="Clark L."/>
            <person name="Harris B."/>
            <person name="Ormond D."/>
            <person name="Abdellah Z."/>
            <person name="Brooks K."/>
            <person name="Cherevach I."/>
            <person name="Chillingworth T."/>
            <person name="Woodward J."/>
            <person name="Norberczak H."/>
            <person name="Lord A."/>
            <person name="Arrowsmith C."/>
            <person name="Jagels K."/>
            <person name="Moule S."/>
            <person name="Mungall K."/>
            <person name="Saunders M."/>
            <person name="Whitehead S."/>
            <person name="Chabalgoity J.A."/>
            <person name="Maskell D."/>
            <person name="Humphreys T."/>
            <person name="Roberts M."/>
            <person name="Barrow P.A."/>
            <person name="Dougan G."/>
            <person name="Parkhill J."/>
        </authorList>
    </citation>
    <scope>NUCLEOTIDE SEQUENCE [LARGE SCALE GENOMIC DNA]</scope>
    <source>
        <strain>P125109</strain>
    </source>
</reference>
<evidence type="ECO:0000255" key="1">
    <source>
        <dbReference type="HAMAP-Rule" id="MF_00679"/>
    </source>
</evidence>
<dbReference type="EMBL" id="AM933172">
    <property type="protein sequence ID" value="CAR34102.1"/>
    <property type="molecule type" value="Genomic_DNA"/>
</dbReference>
<dbReference type="RefSeq" id="WP_001196651.1">
    <property type="nucleotide sequence ID" value="NC_011294.1"/>
</dbReference>
<dbReference type="SMR" id="B5R598"/>
<dbReference type="KEGG" id="set:SEN2519"/>
<dbReference type="HOGENOM" id="CLU_005965_2_1_6"/>
<dbReference type="Proteomes" id="UP000000613">
    <property type="component" value="Chromosome"/>
</dbReference>
<dbReference type="GO" id="GO:0005524">
    <property type="term" value="F:ATP binding"/>
    <property type="evidence" value="ECO:0007669"/>
    <property type="project" value="UniProtKB-KW"/>
</dbReference>
<dbReference type="GO" id="GO:0016887">
    <property type="term" value="F:ATP hydrolysis activity"/>
    <property type="evidence" value="ECO:0007669"/>
    <property type="project" value="UniProtKB-UniRule"/>
</dbReference>
<dbReference type="GO" id="GO:0140662">
    <property type="term" value="F:ATP-dependent protein folding chaperone"/>
    <property type="evidence" value="ECO:0007669"/>
    <property type="project" value="InterPro"/>
</dbReference>
<dbReference type="GO" id="GO:0051082">
    <property type="term" value="F:unfolded protein binding"/>
    <property type="evidence" value="ECO:0007669"/>
    <property type="project" value="InterPro"/>
</dbReference>
<dbReference type="GO" id="GO:0016226">
    <property type="term" value="P:iron-sulfur cluster assembly"/>
    <property type="evidence" value="ECO:0007669"/>
    <property type="project" value="InterPro"/>
</dbReference>
<dbReference type="CDD" id="cd10236">
    <property type="entry name" value="ASKHA_NBD_HSP70_HscA"/>
    <property type="match status" value="1"/>
</dbReference>
<dbReference type="FunFam" id="1.20.1270.10:FF:000006">
    <property type="entry name" value="Chaperone protein HscA"/>
    <property type="match status" value="1"/>
</dbReference>
<dbReference type="FunFam" id="3.30.420.40:FF:000046">
    <property type="entry name" value="Chaperone protein HscA"/>
    <property type="match status" value="1"/>
</dbReference>
<dbReference type="FunFam" id="3.90.640.10:FF:000013">
    <property type="entry name" value="Chaperone protein HscA"/>
    <property type="match status" value="1"/>
</dbReference>
<dbReference type="FunFam" id="2.60.34.10:FF:000005">
    <property type="entry name" value="Chaperone protein HscA homolog"/>
    <property type="match status" value="1"/>
</dbReference>
<dbReference type="Gene3D" id="1.20.1270.10">
    <property type="match status" value="1"/>
</dbReference>
<dbReference type="Gene3D" id="3.30.420.40">
    <property type="match status" value="2"/>
</dbReference>
<dbReference type="Gene3D" id="3.90.640.10">
    <property type="entry name" value="Actin, Chain A, domain 4"/>
    <property type="match status" value="1"/>
</dbReference>
<dbReference type="Gene3D" id="2.60.34.10">
    <property type="entry name" value="Substrate Binding Domain Of DNAk, Chain A, domain 1"/>
    <property type="match status" value="1"/>
</dbReference>
<dbReference type="HAMAP" id="MF_00679">
    <property type="entry name" value="HscA"/>
    <property type="match status" value="1"/>
</dbReference>
<dbReference type="InterPro" id="IPR043129">
    <property type="entry name" value="ATPase_NBD"/>
</dbReference>
<dbReference type="InterPro" id="IPR018181">
    <property type="entry name" value="Heat_shock_70_CS"/>
</dbReference>
<dbReference type="InterPro" id="IPR042039">
    <property type="entry name" value="HscA_NBD"/>
</dbReference>
<dbReference type="InterPro" id="IPR029048">
    <property type="entry name" value="HSP70_C_sf"/>
</dbReference>
<dbReference type="InterPro" id="IPR029047">
    <property type="entry name" value="HSP70_peptide-bd_sf"/>
</dbReference>
<dbReference type="InterPro" id="IPR013126">
    <property type="entry name" value="Hsp_70_fam"/>
</dbReference>
<dbReference type="InterPro" id="IPR010236">
    <property type="entry name" value="ISC_FeS_clus_asmbl_HscA"/>
</dbReference>
<dbReference type="NCBIfam" id="TIGR01991">
    <property type="entry name" value="HscA"/>
    <property type="match status" value="1"/>
</dbReference>
<dbReference type="NCBIfam" id="NF003520">
    <property type="entry name" value="PRK05183.1"/>
    <property type="match status" value="1"/>
</dbReference>
<dbReference type="PANTHER" id="PTHR19375">
    <property type="entry name" value="HEAT SHOCK PROTEIN 70KDA"/>
    <property type="match status" value="1"/>
</dbReference>
<dbReference type="Pfam" id="PF00012">
    <property type="entry name" value="HSP70"/>
    <property type="match status" value="1"/>
</dbReference>
<dbReference type="PRINTS" id="PR00301">
    <property type="entry name" value="HEATSHOCK70"/>
</dbReference>
<dbReference type="SUPFAM" id="SSF53067">
    <property type="entry name" value="Actin-like ATPase domain"/>
    <property type="match status" value="2"/>
</dbReference>
<dbReference type="SUPFAM" id="SSF100934">
    <property type="entry name" value="Heat shock protein 70kD (HSP70), C-terminal subdomain"/>
    <property type="match status" value="1"/>
</dbReference>
<dbReference type="SUPFAM" id="SSF100920">
    <property type="entry name" value="Heat shock protein 70kD (HSP70), peptide-binding domain"/>
    <property type="match status" value="1"/>
</dbReference>
<dbReference type="PROSITE" id="PS00297">
    <property type="entry name" value="HSP70_1"/>
    <property type="match status" value="1"/>
</dbReference>
<dbReference type="PROSITE" id="PS00329">
    <property type="entry name" value="HSP70_2"/>
    <property type="match status" value="1"/>
</dbReference>
<dbReference type="PROSITE" id="PS01036">
    <property type="entry name" value="HSP70_3"/>
    <property type="match status" value="1"/>
</dbReference>
<proteinExistence type="inferred from homology"/>
<gene>
    <name evidence="1" type="primary">hscA</name>
    <name type="ordered locus">SEN2519</name>
</gene>
<keyword id="KW-0067">ATP-binding</keyword>
<keyword id="KW-0143">Chaperone</keyword>
<keyword id="KW-0547">Nucleotide-binding</keyword>
<name>HSCA_SALEP</name>